<feature type="chain" id="PRO_0000148792" description="Aspartyl/glutamyl-tRNA(Asn/Gln) amidotransferase subunit B">
    <location>
        <begin position="1"/>
        <end position="554"/>
    </location>
</feature>
<feature type="region of interest" description="Disordered" evidence="2">
    <location>
        <begin position="491"/>
        <end position="554"/>
    </location>
</feature>
<feature type="compositionally biased region" description="Low complexity" evidence="2">
    <location>
        <begin position="502"/>
        <end position="540"/>
    </location>
</feature>
<name>GATB_GLOVI</name>
<comment type="function">
    <text evidence="1">Allows the formation of correctly charged Asn-tRNA(Asn) or Gln-tRNA(Gln) through the transamidation of misacylated Asp-tRNA(Asn) or Glu-tRNA(Gln) in organisms which lack either or both of asparaginyl-tRNA or glutaminyl-tRNA synthetases. The reaction takes place in the presence of glutamine and ATP through an activated phospho-Asp-tRNA(Asn) or phospho-Glu-tRNA(Gln).</text>
</comment>
<comment type="catalytic activity">
    <reaction evidence="1">
        <text>L-glutamyl-tRNA(Gln) + L-glutamine + ATP + H2O = L-glutaminyl-tRNA(Gln) + L-glutamate + ADP + phosphate + H(+)</text>
        <dbReference type="Rhea" id="RHEA:17521"/>
        <dbReference type="Rhea" id="RHEA-COMP:9681"/>
        <dbReference type="Rhea" id="RHEA-COMP:9684"/>
        <dbReference type="ChEBI" id="CHEBI:15377"/>
        <dbReference type="ChEBI" id="CHEBI:15378"/>
        <dbReference type="ChEBI" id="CHEBI:29985"/>
        <dbReference type="ChEBI" id="CHEBI:30616"/>
        <dbReference type="ChEBI" id="CHEBI:43474"/>
        <dbReference type="ChEBI" id="CHEBI:58359"/>
        <dbReference type="ChEBI" id="CHEBI:78520"/>
        <dbReference type="ChEBI" id="CHEBI:78521"/>
        <dbReference type="ChEBI" id="CHEBI:456216"/>
    </reaction>
</comment>
<comment type="catalytic activity">
    <reaction evidence="1">
        <text>L-aspartyl-tRNA(Asn) + L-glutamine + ATP + H2O = L-asparaginyl-tRNA(Asn) + L-glutamate + ADP + phosphate + 2 H(+)</text>
        <dbReference type="Rhea" id="RHEA:14513"/>
        <dbReference type="Rhea" id="RHEA-COMP:9674"/>
        <dbReference type="Rhea" id="RHEA-COMP:9677"/>
        <dbReference type="ChEBI" id="CHEBI:15377"/>
        <dbReference type="ChEBI" id="CHEBI:15378"/>
        <dbReference type="ChEBI" id="CHEBI:29985"/>
        <dbReference type="ChEBI" id="CHEBI:30616"/>
        <dbReference type="ChEBI" id="CHEBI:43474"/>
        <dbReference type="ChEBI" id="CHEBI:58359"/>
        <dbReference type="ChEBI" id="CHEBI:78515"/>
        <dbReference type="ChEBI" id="CHEBI:78516"/>
        <dbReference type="ChEBI" id="CHEBI:456216"/>
    </reaction>
</comment>
<comment type="subunit">
    <text evidence="1">Heterotrimer of A, B and C subunits.</text>
</comment>
<comment type="similarity">
    <text evidence="1">Belongs to the GatB/GatE family. GatB subfamily.</text>
</comment>
<dbReference type="EC" id="6.3.5.-" evidence="1"/>
<dbReference type="EMBL" id="BA000045">
    <property type="protein sequence ID" value="BAC90283.1"/>
    <property type="molecule type" value="Genomic_DNA"/>
</dbReference>
<dbReference type="RefSeq" id="NP_925288.1">
    <property type="nucleotide sequence ID" value="NC_005125.1"/>
</dbReference>
<dbReference type="RefSeq" id="WP_011142338.1">
    <property type="nucleotide sequence ID" value="NC_005125.1"/>
</dbReference>
<dbReference type="SMR" id="Q7NI42"/>
<dbReference type="FunCoup" id="Q7NI42">
    <property type="interactions" value="362"/>
</dbReference>
<dbReference type="STRING" id="251221.gene:10759839"/>
<dbReference type="EnsemblBacteria" id="BAC90283">
    <property type="protein sequence ID" value="BAC90283"/>
    <property type="gene ID" value="BAC90283"/>
</dbReference>
<dbReference type="KEGG" id="gvi:gll2342"/>
<dbReference type="PATRIC" id="fig|251221.4.peg.2380"/>
<dbReference type="eggNOG" id="COG0064">
    <property type="taxonomic scope" value="Bacteria"/>
</dbReference>
<dbReference type="HOGENOM" id="CLU_019240_0_0_3"/>
<dbReference type="InParanoid" id="Q7NI42"/>
<dbReference type="OrthoDB" id="9804078at2"/>
<dbReference type="PhylomeDB" id="Q7NI42"/>
<dbReference type="Proteomes" id="UP000000557">
    <property type="component" value="Chromosome"/>
</dbReference>
<dbReference type="GO" id="GO:0050566">
    <property type="term" value="F:asparaginyl-tRNA synthase (glutamine-hydrolyzing) activity"/>
    <property type="evidence" value="ECO:0007669"/>
    <property type="project" value="RHEA"/>
</dbReference>
<dbReference type="GO" id="GO:0005524">
    <property type="term" value="F:ATP binding"/>
    <property type="evidence" value="ECO:0007669"/>
    <property type="project" value="UniProtKB-KW"/>
</dbReference>
<dbReference type="GO" id="GO:0050567">
    <property type="term" value="F:glutaminyl-tRNA synthase (glutamine-hydrolyzing) activity"/>
    <property type="evidence" value="ECO:0000318"/>
    <property type="project" value="GO_Central"/>
</dbReference>
<dbReference type="GO" id="GO:0070681">
    <property type="term" value="P:glutaminyl-tRNAGln biosynthesis via transamidation"/>
    <property type="evidence" value="ECO:0000318"/>
    <property type="project" value="GO_Central"/>
</dbReference>
<dbReference type="GO" id="GO:0006412">
    <property type="term" value="P:translation"/>
    <property type="evidence" value="ECO:0007669"/>
    <property type="project" value="UniProtKB-UniRule"/>
</dbReference>
<dbReference type="FunFam" id="1.10.10.410:FF:000001">
    <property type="entry name" value="Aspartyl/glutamyl-tRNA(Asn/Gln) amidotransferase subunit B"/>
    <property type="match status" value="1"/>
</dbReference>
<dbReference type="FunFam" id="1.10.150.380:FF:000001">
    <property type="entry name" value="Aspartyl/glutamyl-tRNA(Asn/Gln) amidotransferase subunit B"/>
    <property type="match status" value="1"/>
</dbReference>
<dbReference type="Gene3D" id="1.10.10.410">
    <property type="match status" value="1"/>
</dbReference>
<dbReference type="Gene3D" id="1.10.150.380">
    <property type="entry name" value="GatB domain, N-terminal subdomain"/>
    <property type="match status" value="1"/>
</dbReference>
<dbReference type="HAMAP" id="MF_00121">
    <property type="entry name" value="GatB"/>
    <property type="match status" value="1"/>
</dbReference>
<dbReference type="InterPro" id="IPR017959">
    <property type="entry name" value="Asn/Gln-tRNA_amidoTrfase_suB/E"/>
</dbReference>
<dbReference type="InterPro" id="IPR006075">
    <property type="entry name" value="Asn/Gln-tRNA_Trfase_suB/E_cat"/>
</dbReference>
<dbReference type="InterPro" id="IPR018027">
    <property type="entry name" value="Asn/Gln_amidotransferase"/>
</dbReference>
<dbReference type="InterPro" id="IPR003789">
    <property type="entry name" value="Asn/Gln_tRNA_amidoTrase-B-like"/>
</dbReference>
<dbReference type="InterPro" id="IPR004413">
    <property type="entry name" value="GatB"/>
</dbReference>
<dbReference type="InterPro" id="IPR042114">
    <property type="entry name" value="GatB_C_1"/>
</dbReference>
<dbReference type="InterPro" id="IPR023168">
    <property type="entry name" value="GatB_Yqey_C_2"/>
</dbReference>
<dbReference type="InterPro" id="IPR017958">
    <property type="entry name" value="Gln-tRNA_amidoTrfase_suB_CS"/>
</dbReference>
<dbReference type="InterPro" id="IPR014746">
    <property type="entry name" value="Gln_synth/guanido_kin_cat_dom"/>
</dbReference>
<dbReference type="NCBIfam" id="TIGR00133">
    <property type="entry name" value="gatB"/>
    <property type="match status" value="1"/>
</dbReference>
<dbReference type="NCBIfam" id="NF004012">
    <property type="entry name" value="PRK05477.1-2"/>
    <property type="match status" value="1"/>
</dbReference>
<dbReference type="NCBIfam" id="NF004014">
    <property type="entry name" value="PRK05477.1-4"/>
    <property type="match status" value="1"/>
</dbReference>
<dbReference type="PANTHER" id="PTHR11659">
    <property type="entry name" value="GLUTAMYL-TRNA GLN AMIDOTRANSFERASE SUBUNIT B MITOCHONDRIAL AND PROKARYOTIC PET112-RELATED"/>
    <property type="match status" value="1"/>
</dbReference>
<dbReference type="PANTHER" id="PTHR11659:SF0">
    <property type="entry name" value="GLUTAMYL-TRNA(GLN) AMIDOTRANSFERASE SUBUNIT B, MITOCHONDRIAL"/>
    <property type="match status" value="1"/>
</dbReference>
<dbReference type="Pfam" id="PF02934">
    <property type="entry name" value="GatB_N"/>
    <property type="match status" value="1"/>
</dbReference>
<dbReference type="Pfam" id="PF02637">
    <property type="entry name" value="GatB_Yqey"/>
    <property type="match status" value="1"/>
</dbReference>
<dbReference type="SMART" id="SM00845">
    <property type="entry name" value="GatB_Yqey"/>
    <property type="match status" value="1"/>
</dbReference>
<dbReference type="SUPFAM" id="SSF89095">
    <property type="entry name" value="GatB/YqeY motif"/>
    <property type="match status" value="1"/>
</dbReference>
<dbReference type="SUPFAM" id="SSF55931">
    <property type="entry name" value="Glutamine synthetase/guanido kinase"/>
    <property type="match status" value="1"/>
</dbReference>
<dbReference type="PROSITE" id="PS01234">
    <property type="entry name" value="GATB"/>
    <property type="match status" value="1"/>
</dbReference>
<reference key="1">
    <citation type="journal article" date="2003" name="DNA Res.">
        <title>Complete genome structure of Gloeobacter violaceus PCC 7421, a cyanobacterium that lacks thylakoids.</title>
        <authorList>
            <person name="Nakamura Y."/>
            <person name="Kaneko T."/>
            <person name="Sato S."/>
            <person name="Mimuro M."/>
            <person name="Miyashita H."/>
            <person name="Tsuchiya T."/>
            <person name="Sasamoto S."/>
            <person name="Watanabe A."/>
            <person name="Kawashima K."/>
            <person name="Kishida Y."/>
            <person name="Kiyokawa C."/>
            <person name="Kohara M."/>
            <person name="Matsumoto M."/>
            <person name="Matsuno A."/>
            <person name="Nakazaki N."/>
            <person name="Shimpo S."/>
            <person name="Takeuchi C."/>
            <person name="Yamada M."/>
            <person name="Tabata S."/>
        </authorList>
    </citation>
    <scope>NUCLEOTIDE SEQUENCE [LARGE SCALE GENOMIC DNA]</scope>
    <source>
        <strain>ATCC 29082 / PCC 7421</strain>
    </source>
</reference>
<accession>Q7NI42</accession>
<evidence type="ECO:0000255" key="1">
    <source>
        <dbReference type="HAMAP-Rule" id="MF_00121"/>
    </source>
</evidence>
<evidence type="ECO:0000256" key="2">
    <source>
        <dbReference type="SAM" id="MobiDB-lite"/>
    </source>
</evidence>
<proteinExistence type="inferred from homology"/>
<organism>
    <name type="scientific">Gloeobacter violaceus (strain ATCC 29082 / PCC 7421)</name>
    <dbReference type="NCBI Taxonomy" id="251221"/>
    <lineage>
        <taxon>Bacteria</taxon>
        <taxon>Bacillati</taxon>
        <taxon>Cyanobacteriota</taxon>
        <taxon>Cyanophyceae</taxon>
        <taxon>Gloeobacterales</taxon>
        <taxon>Gloeobacteraceae</taxon>
        <taxon>Gloeobacter</taxon>
    </lineage>
</organism>
<gene>
    <name evidence="1" type="primary">gatB</name>
    <name type="ordered locus">gll2342</name>
</gene>
<keyword id="KW-0067">ATP-binding</keyword>
<keyword id="KW-0436">Ligase</keyword>
<keyword id="KW-0547">Nucleotide-binding</keyword>
<keyword id="KW-0648">Protein biosynthesis</keyword>
<keyword id="KW-1185">Reference proteome</keyword>
<sequence>MTSTAPPKVQYEAVIGLEVHVQLSTETKLFCRCSTRFGNTPNTNICPICTGQPGTLPVLNQQALDYAVLTASALNCQIHPQGLSKFDRKQYFYPDLPKNYQISQYDLPLAERGWLEIEVEGEPAKRIGITRLHMEEDAGKLVHAGADRLSGSTHSLVDFNRAGVALCEIVSEPDIRTAAEAAAYAGELRRIVRYLGVCDGNMQEGSLRFDLNISVRPAGEGKFGTKVEIKNLNSFNSLQRAVEYEFARQVDCLLSGERIVQETRLWDEATQRTISMRSKEEANDYRYFPEPDLVPIALNGTQIDAYRQRLGELPAQKRHRYRETLGLSSYDAGVLTDEREVAEYFEQVVALGIPAKQAANFVSGAVAAHLNETRRSISQIKVTPEVSAELLALINQGIISNRIANELLPDLFEKGGSPRALVEERGLTQISDRGQLEQIVDEVLAGESDSVAAYRGGRTKLLGFFVGKVMKKTAGRADPQVVNDLLQSKLAEQPTAPPPEPESAAETPEAPPAVEDAPPEAPTEAITAEAGSAEAITAASEEPDTPVSHQDAHA</sequence>
<protein>
    <recommendedName>
        <fullName evidence="1">Aspartyl/glutamyl-tRNA(Asn/Gln) amidotransferase subunit B</fullName>
        <shortName evidence="1">Asp/Glu-ADT subunit B</shortName>
        <ecNumber evidence="1">6.3.5.-</ecNumber>
    </recommendedName>
</protein>